<keyword id="KW-0414">Isoprene biosynthesis</keyword>
<keyword id="KW-0456">Lyase</keyword>
<keyword id="KW-0479">Metal-binding</keyword>
<keyword id="KW-1185">Reference proteome</keyword>
<name>ISPF_CITK8</name>
<organism>
    <name type="scientific">Citrobacter koseri (strain ATCC BAA-895 / CDC 4225-83 / SGSC4696)</name>
    <dbReference type="NCBI Taxonomy" id="290338"/>
    <lineage>
        <taxon>Bacteria</taxon>
        <taxon>Pseudomonadati</taxon>
        <taxon>Pseudomonadota</taxon>
        <taxon>Gammaproteobacteria</taxon>
        <taxon>Enterobacterales</taxon>
        <taxon>Enterobacteriaceae</taxon>
        <taxon>Citrobacter</taxon>
    </lineage>
</organism>
<accession>A8ANW0</accession>
<gene>
    <name evidence="1" type="primary">ispF</name>
    <name type="ordered locus">CKO_04107</name>
</gene>
<reference key="1">
    <citation type="submission" date="2007-08" db="EMBL/GenBank/DDBJ databases">
        <authorList>
            <consortium name="The Citrobacter koseri Genome Sequencing Project"/>
            <person name="McClelland M."/>
            <person name="Sanderson E.K."/>
            <person name="Porwollik S."/>
            <person name="Spieth J."/>
            <person name="Clifton W.S."/>
            <person name="Latreille P."/>
            <person name="Courtney L."/>
            <person name="Wang C."/>
            <person name="Pepin K."/>
            <person name="Bhonagiri V."/>
            <person name="Nash W."/>
            <person name="Johnson M."/>
            <person name="Thiruvilangam P."/>
            <person name="Wilson R."/>
        </authorList>
    </citation>
    <scope>NUCLEOTIDE SEQUENCE [LARGE SCALE GENOMIC DNA]</scope>
    <source>
        <strain>ATCC BAA-895 / CDC 4225-83 / SGSC4696</strain>
    </source>
</reference>
<comment type="function">
    <text evidence="1">Involved in the biosynthesis of isopentenyl diphosphate (IPP) and dimethylallyl diphosphate (DMAPP), two major building blocks of isoprenoid compounds. Catalyzes the conversion of 4-diphosphocytidyl-2-C-methyl-D-erythritol 2-phosphate (CDP-ME2P) to 2-C-methyl-D-erythritol 2,4-cyclodiphosphate (ME-CPP) with a corresponding release of cytidine 5-monophosphate (CMP).</text>
</comment>
<comment type="catalytic activity">
    <reaction evidence="1">
        <text>4-CDP-2-C-methyl-D-erythritol 2-phosphate = 2-C-methyl-D-erythritol 2,4-cyclic diphosphate + CMP</text>
        <dbReference type="Rhea" id="RHEA:23864"/>
        <dbReference type="ChEBI" id="CHEBI:57919"/>
        <dbReference type="ChEBI" id="CHEBI:58483"/>
        <dbReference type="ChEBI" id="CHEBI:60377"/>
        <dbReference type="EC" id="4.6.1.12"/>
    </reaction>
</comment>
<comment type="cofactor">
    <cofactor evidence="1">
        <name>a divalent metal cation</name>
        <dbReference type="ChEBI" id="CHEBI:60240"/>
    </cofactor>
    <text evidence="1">Binds 1 divalent metal cation per subunit.</text>
</comment>
<comment type="pathway">
    <text evidence="1">Isoprenoid biosynthesis; isopentenyl diphosphate biosynthesis via DXP pathway; isopentenyl diphosphate from 1-deoxy-D-xylulose 5-phosphate: step 4/6.</text>
</comment>
<comment type="subunit">
    <text evidence="1">Homotrimer.</text>
</comment>
<comment type="similarity">
    <text evidence="1">Belongs to the IspF family.</text>
</comment>
<proteinExistence type="inferred from homology"/>
<protein>
    <recommendedName>
        <fullName evidence="1">2-C-methyl-D-erythritol 2,4-cyclodiphosphate synthase</fullName>
        <shortName evidence="1">MECDP-synthase</shortName>
        <shortName evidence="1">MECPP-synthase</shortName>
        <shortName evidence="1">MECPS</shortName>
        <ecNumber evidence="1">4.6.1.12</ecNumber>
    </recommendedName>
</protein>
<dbReference type="EC" id="4.6.1.12" evidence="1"/>
<dbReference type="EMBL" id="CP000822">
    <property type="protein sequence ID" value="ABV15173.1"/>
    <property type="molecule type" value="Genomic_DNA"/>
</dbReference>
<dbReference type="RefSeq" id="WP_012134862.1">
    <property type="nucleotide sequence ID" value="NC_009792.1"/>
</dbReference>
<dbReference type="SMR" id="A8ANW0"/>
<dbReference type="STRING" id="290338.CKO_04107"/>
<dbReference type="GeneID" id="45137744"/>
<dbReference type="KEGG" id="cko:CKO_04107"/>
<dbReference type="HOGENOM" id="CLU_084630_2_0_6"/>
<dbReference type="OrthoDB" id="9804336at2"/>
<dbReference type="UniPathway" id="UPA00056">
    <property type="reaction ID" value="UER00095"/>
</dbReference>
<dbReference type="Proteomes" id="UP000008148">
    <property type="component" value="Chromosome"/>
</dbReference>
<dbReference type="GO" id="GO:0008685">
    <property type="term" value="F:2-C-methyl-D-erythritol 2,4-cyclodiphosphate synthase activity"/>
    <property type="evidence" value="ECO:0007669"/>
    <property type="project" value="UniProtKB-UniRule"/>
</dbReference>
<dbReference type="GO" id="GO:0046872">
    <property type="term" value="F:metal ion binding"/>
    <property type="evidence" value="ECO:0007669"/>
    <property type="project" value="UniProtKB-KW"/>
</dbReference>
<dbReference type="GO" id="GO:0019288">
    <property type="term" value="P:isopentenyl diphosphate biosynthetic process, methylerythritol 4-phosphate pathway"/>
    <property type="evidence" value="ECO:0007669"/>
    <property type="project" value="UniProtKB-UniRule"/>
</dbReference>
<dbReference type="GO" id="GO:0016114">
    <property type="term" value="P:terpenoid biosynthetic process"/>
    <property type="evidence" value="ECO:0007669"/>
    <property type="project" value="InterPro"/>
</dbReference>
<dbReference type="CDD" id="cd00554">
    <property type="entry name" value="MECDP_synthase"/>
    <property type="match status" value="1"/>
</dbReference>
<dbReference type="FunFam" id="3.30.1330.50:FF:000001">
    <property type="entry name" value="2-C-methyl-D-erythritol 2,4-cyclodiphosphate synthase"/>
    <property type="match status" value="1"/>
</dbReference>
<dbReference type="Gene3D" id="3.30.1330.50">
    <property type="entry name" value="2-C-methyl-D-erythritol 2,4-cyclodiphosphate synthase"/>
    <property type="match status" value="1"/>
</dbReference>
<dbReference type="HAMAP" id="MF_00107">
    <property type="entry name" value="IspF"/>
    <property type="match status" value="1"/>
</dbReference>
<dbReference type="InterPro" id="IPR003526">
    <property type="entry name" value="MECDP_synthase"/>
</dbReference>
<dbReference type="InterPro" id="IPR020555">
    <property type="entry name" value="MECDP_synthase_CS"/>
</dbReference>
<dbReference type="InterPro" id="IPR036571">
    <property type="entry name" value="MECDP_synthase_sf"/>
</dbReference>
<dbReference type="NCBIfam" id="TIGR00151">
    <property type="entry name" value="ispF"/>
    <property type="match status" value="1"/>
</dbReference>
<dbReference type="PANTHER" id="PTHR43181">
    <property type="entry name" value="2-C-METHYL-D-ERYTHRITOL 2,4-CYCLODIPHOSPHATE SYNTHASE, CHLOROPLASTIC"/>
    <property type="match status" value="1"/>
</dbReference>
<dbReference type="PANTHER" id="PTHR43181:SF1">
    <property type="entry name" value="2-C-METHYL-D-ERYTHRITOL 2,4-CYCLODIPHOSPHATE SYNTHASE, CHLOROPLASTIC"/>
    <property type="match status" value="1"/>
</dbReference>
<dbReference type="Pfam" id="PF02542">
    <property type="entry name" value="YgbB"/>
    <property type="match status" value="1"/>
</dbReference>
<dbReference type="SUPFAM" id="SSF69765">
    <property type="entry name" value="IpsF-like"/>
    <property type="match status" value="1"/>
</dbReference>
<dbReference type="PROSITE" id="PS01350">
    <property type="entry name" value="ISPF"/>
    <property type="match status" value="1"/>
</dbReference>
<sequence>MRIGHGFDVHAFGGEGPIIIGGVRIPYDKGLLAHSDGDVALHALTDALLGAAALGDIGKLFPDTDPAFKGADSRELLREAWRRIQAKGYTLGNVDVTIIAQAPKMLPHIPQMRVFIAEDLGCHMDDVNVKATTTEKLGFTGRGEGIACEAVALLIKAAK</sequence>
<evidence type="ECO:0000255" key="1">
    <source>
        <dbReference type="HAMAP-Rule" id="MF_00107"/>
    </source>
</evidence>
<feature type="chain" id="PRO_1000022822" description="2-C-methyl-D-erythritol 2,4-cyclodiphosphate synthase">
    <location>
        <begin position="1"/>
        <end position="159"/>
    </location>
</feature>
<feature type="binding site" evidence="1">
    <location>
        <begin position="8"/>
        <end position="10"/>
    </location>
    <ligand>
        <name>4-CDP-2-C-methyl-D-erythritol 2-phosphate</name>
        <dbReference type="ChEBI" id="CHEBI:57919"/>
    </ligand>
</feature>
<feature type="binding site" evidence="1">
    <location>
        <position position="8"/>
    </location>
    <ligand>
        <name>a divalent metal cation</name>
        <dbReference type="ChEBI" id="CHEBI:60240"/>
    </ligand>
</feature>
<feature type="binding site" evidence="1">
    <location>
        <position position="10"/>
    </location>
    <ligand>
        <name>a divalent metal cation</name>
        <dbReference type="ChEBI" id="CHEBI:60240"/>
    </ligand>
</feature>
<feature type="binding site" evidence="1">
    <location>
        <begin position="34"/>
        <end position="35"/>
    </location>
    <ligand>
        <name>4-CDP-2-C-methyl-D-erythritol 2-phosphate</name>
        <dbReference type="ChEBI" id="CHEBI:57919"/>
    </ligand>
</feature>
<feature type="binding site" evidence="1">
    <location>
        <position position="42"/>
    </location>
    <ligand>
        <name>a divalent metal cation</name>
        <dbReference type="ChEBI" id="CHEBI:60240"/>
    </ligand>
</feature>
<feature type="binding site" evidence="1">
    <location>
        <begin position="56"/>
        <end position="58"/>
    </location>
    <ligand>
        <name>4-CDP-2-C-methyl-D-erythritol 2-phosphate</name>
        <dbReference type="ChEBI" id="CHEBI:57919"/>
    </ligand>
</feature>
<feature type="binding site" evidence="1">
    <location>
        <begin position="61"/>
        <end position="65"/>
    </location>
    <ligand>
        <name>4-CDP-2-C-methyl-D-erythritol 2-phosphate</name>
        <dbReference type="ChEBI" id="CHEBI:57919"/>
    </ligand>
</feature>
<feature type="binding site" evidence="1">
    <location>
        <begin position="100"/>
        <end position="106"/>
    </location>
    <ligand>
        <name>4-CDP-2-C-methyl-D-erythritol 2-phosphate</name>
        <dbReference type="ChEBI" id="CHEBI:57919"/>
    </ligand>
</feature>
<feature type="binding site" evidence="1">
    <location>
        <begin position="132"/>
        <end position="135"/>
    </location>
    <ligand>
        <name>4-CDP-2-C-methyl-D-erythritol 2-phosphate</name>
        <dbReference type="ChEBI" id="CHEBI:57919"/>
    </ligand>
</feature>
<feature type="binding site" evidence="1">
    <location>
        <position position="139"/>
    </location>
    <ligand>
        <name>4-CDP-2-C-methyl-D-erythritol 2-phosphate</name>
        <dbReference type="ChEBI" id="CHEBI:57919"/>
    </ligand>
</feature>
<feature type="binding site" evidence="1">
    <location>
        <position position="142"/>
    </location>
    <ligand>
        <name>4-CDP-2-C-methyl-D-erythritol 2-phosphate</name>
        <dbReference type="ChEBI" id="CHEBI:57919"/>
    </ligand>
</feature>
<feature type="site" description="Transition state stabilizer" evidence="1">
    <location>
        <position position="34"/>
    </location>
</feature>
<feature type="site" description="Transition state stabilizer" evidence="1">
    <location>
        <position position="133"/>
    </location>
</feature>